<organism>
    <name type="scientific">Dehalococcoides mccartyi (strain ATCC BAA-2100 / JCM 16839 / KCTC 5957 / BAV1)</name>
    <dbReference type="NCBI Taxonomy" id="216389"/>
    <lineage>
        <taxon>Bacteria</taxon>
        <taxon>Bacillati</taxon>
        <taxon>Chloroflexota</taxon>
        <taxon>Dehalococcoidia</taxon>
        <taxon>Dehalococcoidales</taxon>
        <taxon>Dehalococcoidaceae</taxon>
        <taxon>Dehalococcoides</taxon>
    </lineage>
</organism>
<name>YBEY_DEHMB</name>
<gene>
    <name evidence="1" type="primary">ybeY</name>
    <name type="ordered locus">DehaBAV1_1181</name>
</gene>
<sequence>MEINVIVKPPFKKLVSAQFLKKIASETLKAQAADPSSELGIVITGQEEIKELNCKYRQLDEPTDVLSFYMLEENPENLTAPDDFPTPPDEATHLGEVIISYPQAELQAGAAGHSVNHELAFLLIHGVLHLLGYDHHETAAEAVMKSHQDIAMKHIREILE</sequence>
<dbReference type="EC" id="3.1.-.-" evidence="1"/>
<dbReference type="EMBL" id="CP000688">
    <property type="protein sequence ID" value="ABQ17760.1"/>
    <property type="molecule type" value="Genomic_DNA"/>
</dbReference>
<dbReference type="SMR" id="A5FPW5"/>
<dbReference type="KEGG" id="deb:DehaBAV1_1181"/>
<dbReference type="PATRIC" id="fig|216389.18.peg.1244"/>
<dbReference type="HOGENOM" id="CLU_106710_3_0_0"/>
<dbReference type="GO" id="GO:0005737">
    <property type="term" value="C:cytoplasm"/>
    <property type="evidence" value="ECO:0007669"/>
    <property type="project" value="UniProtKB-SubCell"/>
</dbReference>
<dbReference type="GO" id="GO:0004222">
    <property type="term" value="F:metalloendopeptidase activity"/>
    <property type="evidence" value="ECO:0007669"/>
    <property type="project" value="InterPro"/>
</dbReference>
<dbReference type="GO" id="GO:0004521">
    <property type="term" value="F:RNA endonuclease activity"/>
    <property type="evidence" value="ECO:0007669"/>
    <property type="project" value="UniProtKB-UniRule"/>
</dbReference>
<dbReference type="GO" id="GO:0008270">
    <property type="term" value="F:zinc ion binding"/>
    <property type="evidence" value="ECO:0007669"/>
    <property type="project" value="UniProtKB-UniRule"/>
</dbReference>
<dbReference type="GO" id="GO:0006364">
    <property type="term" value="P:rRNA processing"/>
    <property type="evidence" value="ECO:0007669"/>
    <property type="project" value="UniProtKB-UniRule"/>
</dbReference>
<dbReference type="Gene3D" id="3.40.390.30">
    <property type="entry name" value="Metalloproteases ('zincins'), catalytic domain"/>
    <property type="match status" value="1"/>
</dbReference>
<dbReference type="HAMAP" id="MF_00009">
    <property type="entry name" value="Endoribonucl_YbeY"/>
    <property type="match status" value="1"/>
</dbReference>
<dbReference type="InterPro" id="IPR023091">
    <property type="entry name" value="MetalPrtase_cat_dom_sf_prd"/>
</dbReference>
<dbReference type="InterPro" id="IPR002036">
    <property type="entry name" value="YbeY"/>
</dbReference>
<dbReference type="InterPro" id="IPR020549">
    <property type="entry name" value="YbeY_CS"/>
</dbReference>
<dbReference type="NCBIfam" id="TIGR00043">
    <property type="entry name" value="rRNA maturation RNase YbeY"/>
    <property type="match status" value="1"/>
</dbReference>
<dbReference type="PANTHER" id="PTHR46986">
    <property type="entry name" value="ENDORIBONUCLEASE YBEY, CHLOROPLASTIC"/>
    <property type="match status" value="1"/>
</dbReference>
<dbReference type="PANTHER" id="PTHR46986:SF1">
    <property type="entry name" value="ENDORIBONUCLEASE YBEY, CHLOROPLASTIC"/>
    <property type="match status" value="1"/>
</dbReference>
<dbReference type="Pfam" id="PF02130">
    <property type="entry name" value="YbeY"/>
    <property type="match status" value="1"/>
</dbReference>
<dbReference type="SUPFAM" id="SSF55486">
    <property type="entry name" value="Metalloproteases ('zincins'), catalytic domain"/>
    <property type="match status" value="1"/>
</dbReference>
<dbReference type="PROSITE" id="PS01306">
    <property type="entry name" value="UPF0054"/>
    <property type="match status" value="1"/>
</dbReference>
<accession>A5FPW5</accession>
<feature type="chain" id="PRO_0000336010" description="Endoribonuclease YbeY">
    <location>
        <begin position="1"/>
        <end position="160"/>
    </location>
</feature>
<feature type="binding site" evidence="1">
    <location>
        <position position="125"/>
    </location>
    <ligand>
        <name>Zn(2+)</name>
        <dbReference type="ChEBI" id="CHEBI:29105"/>
        <note>catalytic</note>
    </ligand>
</feature>
<feature type="binding site" evidence="1">
    <location>
        <position position="129"/>
    </location>
    <ligand>
        <name>Zn(2+)</name>
        <dbReference type="ChEBI" id="CHEBI:29105"/>
        <note>catalytic</note>
    </ligand>
</feature>
<feature type="binding site" evidence="1">
    <location>
        <position position="135"/>
    </location>
    <ligand>
        <name>Zn(2+)</name>
        <dbReference type="ChEBI" id="CHEBI:29105"/>
        <note>catalytic</note>
    </ligand>
</feature>
<protein>
    <recommendedName>
        <fullName evidence="1">Endoribonuclease YbeY</fullName>
        <ecNumber evidence="1">3.1.-.-</ecNumber>
    </recommendedName>
</protein>
<reference key="1">
    <citation type="submission" date="2007-05" db="EMBL/GenBank/DDBJ databases">
        <title>Complete sequence of Dehalococcoides sp. BAV1.</title>
        <authorList>
            <consortium name="US DOE Joint Genome Institute"/>
            <person name="Copeland A."/>
            <person name="Lucas S."/>
            <person name="Lapidus A."/>
            <person name="Barry K."/>
            <person name="Detter J.C."/>
            <person name="Glavina del Rio T."/>
            <person name="Hammon N."/>
            <person name="Israni S."/>
            <person name="Pitluck S."/>
            <person name="Lowry S."/>
            <person name="Clum A."/>
            <person name="Schmutz J."/>
            <person name="Larimer F."/>
            <person name="Land M."/>
            <person name="Hauser L."/>
            <person name="Kyrpides N."/>
            <person name="Kim E."/>
            <person name="Ritalahti K.M."/>
            <person name="Loeffler F."/>
            <person name="Richardson P."/>
        </authorList>
    </citation>
    <scope>NUCLEOTIDE SEQUENCE [LARGE SCALE GENOMIC DNA]</scope>
    <source>
        <strain>ATCC BAA-2100 / JCM 16839 / KCTC 5957 / BAV1</strain>
    </source>
</reference>
<proteinExistence type="inferred from homology"/>
<evidence type="ECO:0000255" key="1">
    <source>
        <dbReference type="HAMAP-Rule" id="MF_00009"/>
    </source>
</evidence>
<comment type="function">
    <text evidence="1">Single strand-specific metallo-endoribonuclease involved in late-stage 70S ribosome quality control and in maturation of the 3' terminus of the 16S rRNA.</text>
</comment>
<comment type="cofactor">
    <cofactor evidence="1">
        <name>Zn(2+)</name>
        <dbReference type="ChEBI" id="CHEBI:29105"/>
    </cofactor>
    <text evidence="1">Binds 1 zinc ion.</text>
</comment>
<comment type="subcellular location">
    <subcellularLocation>
        <location evidence="1">Cytoplasm</location>
    </subcellularLocation>
</comment>
<comment type="similarity">
    <text evidence="1">Belongs to the endoribonuclease YbeY family.</text>
</comment>
<keyword id="KW-0963">Cytoplasm</keyword>
<keyword id="KW-0255">Endonuclease</keyword>
<keyword id="KW-0378">Hydrolase</keyword>
<keyword id="KW-0479">Metal-binding</keyword>
<keyword id="KW-0540">Nuclease</keyword>
<keyword id="KW-0690">Ribosome biogenesis</keyword>
<keyword id="KW-0698">rRNA processing</keyword>
<keyword id="KW-0862">Zinc</keyword>